<evidence type="ECO:0000250" key="1">
    <source>
        <dbReference type="UniProtKB" id="P29022"/>
    </source>
</evidence>
<evidence type="ECO:0000255" key="2"/>
<evidence type="ECO:0000255" key="3">
    <source>
        <dbReference type="PROSITE-ProRule" id="PRU00261"/>
    </source>
</evidence>
<evidence type="ECO:0000269" key="4">
    <source>
    </source>
</evidence>
<evidence type="ECO:0000269" key="5">
    <source>
    </source>
</evidence>
<evidence type="ECO:0000305" key="6"/>
<protein>
    <recommendedName>
        <fullName>Chitinase 1</fullName>
        <ecNumber>3.2.1.14</ecNumber>
    </recommendedName>
    <alternativeName>
        <fullName>Class I chitinase a</fullName>
        <shortName>OsChia1a</shortName>
    </alternativeName>
    <alternativeName>
        <fullName>Pathogenesis related (PR)-3 chitinase 1</fullName>
    </alternativeName>
</protein>
<reference key="1">
    <citation type="journal article" date="1993" name="Mol. Gen. Genet.">
        <title>Sequence variation, differential expression and chromosomal location of rice chitinase genes.</title>
        <authorList>
            <person name="Nishizawa Y."/>
            <person name="Kishimoto N."/>
            <person name="Saito A."/>
            <person name="Hibi T."/>
        </authorList>
    </citation>
    <scope>NUCLEOTIDE SEQUENCE [GENOMIC DNA]</scope>
    <source>
        <strain>cv. Nipponbare</strain>
    </source>
</reference>
<reference key="2">
    <citation type="submission" date="2006-11" db="EMBL/GenBank/DDBJ databases">
        <title>Molecular cloning of chitinase genes in rice seeds.</title>
        <authorList>
            <person name="Yoon U.H."/>
            <person name="Kim Y.H."/>
        </authorList>
    </citation>
    <scope>NUCLEOTIDE SEQUENCE [MRNA]</scope>
    <source>
        <strain>cv. Ilpoombyeo</strain>
    </source>
</reference>
<reference key="3">
    <citation type="journal article" date="2005" name="Nature">
        <title>The map-based sequence of the rice genome.</title>
        <authorList>
            <consortium name="International rice genome sequencing project (IRGSP)"/>
        </authorList>
    </citation>
    <scope>NUCLEOTIDE SEQUENCE [LARGE SCALE GENOMIC DNA]</scope>
    <source>
        <strain>cv. Nipponbare</strain>
    </source>
</reference>
<reference key="4">
    <citation type="journal article" date="2013" name="Rice">
        <title>Improvement of the Oryza sativa Nipponbare reference genome using next generation sequence and optical map data.</title>
        <authorList>
            <person name="Kawahara Y."/>
            <person name="de la Bastide M."/>
            <person name="Hamilton J.P."/>
            <person name="Kanamori H."/>
            <person name="McCombie W.R."/>
            <person name="Ouyang S."/>
            <person name="Schwartz D.C."/>
            <person name="Tanaka T."/>
            <person name="Wu J."/>
            <person name="Zhou S."/>
            <person name="Childs K.L."/>
            <person name="Davidson R.M."/>
            <person name="Lin H."/>
            <person name="Quesada-Ocampo L."/>
            <person name="Vaillancourt B."/>
            <person name="Sakai H."/>
            <person name="Lee S.S."/>
            <person name="Kim J."/>
            <person name="Numa H."/>
            <person name="Itoh T."/>
            <person name="Buell C.R."/>
            <person name="Matsumoto T."/>
        </authorList>
    </citation>
    <scope>GENOME REANNOTATION</scope>
    <source>
        <strain>cv. Nipponbare</strain>
    </source>
</reference>
<reference key="5">
    <citation type="journal article" date="2005" name="PLoS Biol.">
        <title>The genomes of Oryza sativa: a history of duplications.</title>
        <authorList>
            <person name="Yu J."/>
            <person name="Wang J."/>
            <person name="Lin W."/>
            <person name="Li S."/>
            <person name="Li H."/>
            <person name="Zhou J."/>
            <person name="Ni P."/>
            <person name="Dong W."/>
            <person name="Hu S."/>
            <person name="Zeng C."/>
            <person name="Zhang J."/>
            <person name="Zhang Y."/>
            <person name="Li R."/>
            <person name="Xu Z."/>
            <person name="Li S."/>
            <person name="Li X."/>
            <person name="Zheng H."/>
            <person name="Cong L."/>
            <person name="Lin L."/>
            <person name="Yin J."/>
            <person name="Geng J."/>
            <person name="Li G."/>
            <person name="Shi J."/>
            <person name="Liu J."/>
            <person name="Lv H."/>
            <person name="Li J."/>
            <person name="Wang J."/>
            <person name="Deng Y."/>
            <person name="Ran L."/>
            <person name="Shi X."/>
            <person name="Wang X."/>
            <person name="Wu Q."/>
            <person name="Li C."/>
            <person name="Ren X."/>
            <person name="Wang J."/>
            <person name="Wang X."/>
            <person name="Li D."/>
            <person name="Liu D."/>
            <person name="Zhang X."/>
            <person name="Ji Z."/>
            <person name="Zhao W."/>
            <person name="Sun Y."/>
            <person name="Zhang Z."/>
            <person name="Bao J."/>
            <person name="Han Y."/>
            <person name="Dong L."/>
            <person name="Ji J."/>
            <person name="Chen P."/>
            <person name="Wu S."/>
            <person name="Liu J."/>
            <person name="Xiao Y."/>
            <person name="Bu D."/>
            <person name="Tan J."/>
            <person name="Yang L."/>
            <person name="Ye C."/>
            <person name="Zhang J."/>
            <person name="Xu J."/>
            <person name="Zhou Y."/>
            <person name="Yu Y."/>
            <person name="Zhang B."/>
            <person name="Zhuang S."/>
            <person name="Wei H."/>
            <person name="Liu B."/>
            <person name="Lei M."/>
            <person name="Yu H."/>
            <person name="Li Y."/>
            <person name="Xu H."/>
            <person name="Wei S."/>
            <person name="He X."/>
            <person name="Fang L."/>
            <person name="Zhang Z."/>
            <person name="Zhang Y."/>
            <person name="Huang X."/>
            <person name="Su Z."/>
            <person name="Tong W."/>
            <person name="Li J."/>
            <person name="Tong Z."/>
            <person name="Li S."/>
            <person name="Ye J."/>
            <person name="Wang L."/>
            <person name="Fang L."/>
            <person name="Lei T."/>
            <person name="Chen C.-S."/>
            <person name="Chen H.-C."/>
            <person name="Xu Z."/>
            <person name="Li H."/>
            <person name="Huang H."/>
            <person name="Zhang F."/>
            <person name="Xu H."/>
            <person name="Li N."/>
            <person name="Zhao C."/>
            <person name="Li S."/>
            <person name="Dong L."/>
            <person name="Huang Y."/>
            <person name="Li L."/>
            <person name="Xi Y."/>
            <person name="Qi Q."/>
            <person name="Li W."/>
            <person name="Zhang B."/>
            <person name="Hu W."/>
            <person name="Zhang Y."/>
            <person name="Tian X."/>
            <person name="Jiao Y."/>
            <person name="Liang X."/>
            <person name="Jin J."/>
            <person name="Gao L."/>
            <person name="Zheng W."/>
            <person name="Hao B."/>
            <person name="Liu S.-M."/>
            <person name="Wang W."/>
            <person name="Yuan L."/>
            <person name="Cao M."/>
            <person name="McDermott J."/>
            <person name="Samudrala R."/>
            <person name="Wang J."/>
            <person name="Wong G.K.-S."/>
            <person name="Yang H."/>
        </authorList>
    </citation>
    <scope>NUCLEOTIDE SEQUENCE [LARGE SCALE GENOMIC DNA]</scope>
    <source>
        <strain>cv. Nipponbare</strain>
    </source>
</reference>
<reference key="6">
    <citation type="journal article" date="1991" name="Plant Sci.">
        <title>Isolation and characterization of a cDNA for rice chitinase.</title>
        <authorList>
            <person name="Nishizawa Y."/>
            <person name="Hibi T."/>
        </authorList>
    </citation>
    <scope>NUCLEOTIDE SEQUENCE [MRNA] OF 21-323</scope>
    <source>
        <strain>cv. Nipponbare</strain>
    </source>
</reference>
<reference key="7">
    <citation type="journal article" date="1996" name="Plant Mol. Biol.">
        <title>Regulation, expression and function of a new basic chitinase gene in rice (Oryza sativa L.).</title>
        <authorList>
            <person name="Xu Y."/>
            <person name="Zhu Q."/>
            <person name="Panbangred W."/>
            <person name="Shirasu K."/>
            <person name="Lamb C."/>
        </authorList>
    </citation>
    <scope>FUNCTION</scope>
    <scope>INDUCTION</scope>
</reference>
<reference key="8">
    <citation type="journal article" date="2006" name="Genome">
        <title>Distribution, structure, organ-specific expression, and phylogenic analysis of the pathogenesis-related protein-3 chitinase gene family in rice (Oryza sativa L.).</title>
        <authorList>
            <person name="Nakazaki T."/>
            <person name="Tsukiyama T."/>
            <person name="Okumoto Y."/>
            <person name="Kageyama D."/>
            <person name="Naito K."/>
            <person name="Inouye K."/>
            <person name="Tanisaka T."/>
        </authorList>
    </citation>
    <scope>GENE FAMILY</scope>
    <scope>NOMENCLATURE</scope>
    <scope>TISSUE SPECIFICITY</scope>
</reference>
<keyword id="KW-0119">Carbohydrate metabolism</keyword>
<keyword id="KW-0146">Chitin degradation</keyword>
<keyword id="KW-0147">Chitin-binding</keyword>
<keyword id="KW-1015">Disulfide bond</keyword>
<keyword id="KW-0326">Glycosidase</keyword>
<keyword id="KW-0378">Hydrolase</keyword>
<keyword id="KW-0611">Plant defense</keyword>
<keyword id="KW-0624">Polysaccharide degradation</keyword>
<keyword id="KW-1185">Reference proteome</keyword>
<keyword id="KW-0732">Signal</keyword>
<proteinExistence type="evidence at transcript level"/>
<organism>
    <name type="scientific">Oryza sativa subsp. japonica</name>
    <name type="common">Rice</name>
    <dbReference type="NCBI Taxonomy" id="39947"/>
    <lineage>
        <taxon>Eukaryota</taxon>
        <taxon>Viridiplantae</taxon>
        <taxon>Streptophyta</taxon>
        <taxon>Embryophyta</taxon>
        <taxon>Tracheophyta</taxon>
        <taxon>Spermatophyta</taxon>
        <taxon>Magnoliopsida</taxon>
        <taxon>Liliopsida</taxon>
        <taxon>Poales</taxon>
        <taxon>Poaceae</taxon>
        <taxon>BOP clade</taxon>
        <taxon>Oryzoideae</taxon>
        <taxon>Oryzeae</taxon>
        <taxon>Oryzinae</taxon>
        <taxon>Oryza</taxon>
        <taxon>Oryza sativa</taxon>
    </lineage>
</organism>
<feature type="signal peptide" evidence="2">
    <location>
        <begin position="1"/>
        <end position="20"/>
    </location>
</feature>
<feature type="chain" id="PRO_5000139668" description="Chitinase 1">
    <location>
        <begin position="21"/>
        <end position="323"/>
    </location>
</feature>
<feature type="domain" description="Chitin-binding type-1" evidence="3">
    <location>
        <begin position="21"/>
        <end position="61"/>
    </location>
</feature>
<feature type="active site" description="Proton donor" evidence="1">
    <location>
        <position position="144"/>
    </location>
</feature>
<feature type="disulfide bond" evidence="3">
    <location>
        <begin position="23"/>
        <end position="38"/>
    </location>
</feature>
<feature type="disulfide bond" evidence="3">
    <location>
        <begin position="32"/>
        <end position="44"/>
    </location>
</feature>
<feature type="disulfide bond" evidence="3">
    <location>
        <begin position="35"/>
        <end position="63"/>
    </location>
</feature>
<feature type="disulfide bond" evidence="3">
    <location>
        <begin position="37"/>
        <end position="51"/>
    </location>
</feature>
<feature type="disulfide bond" evidence="3">
    <location>
        <begin position="55"/>
        <end position="59"/>
    </location>
</feature>
<feature type="disulfide bond" evidence="3">
    <location>
        <begin position="100"/>
        <end position="162"/>
    </location>
</feature>
<feature type="disulfide bond" evidence="3">
    <location>
        <begin position="176"/>
        <end position="184"/>
    </location>
</feature>
<feature type="disulfide bond" evidence="3">
    <location>
        <begin position="283"/>
        <end position="315"/>
    </location>
</feature>
<accession>Q42993</accession>
<accession>A0A0P0X1A6</accession>
<accession>Q42996</accession>
<accession>Q7DM46</accession>
<name>CHI1_ORYSJ</name>
<gene>
    <name type="primary">Cht1</name>
    <name type="synonym">CH16</name>
    <name type="synonym">RC24</name>
    <name type="ordered locus">Os06g0726200</name>
    <name type="ordered locus">LOC_Os06g51060</name>
    <name type="ORF">OsJ_22713</name>
    <name type="ORF">P0017G10.4</name>
    <name type="ORF">P0548E04.24</name>
</gene>
<sequence length="323" mass="33765">MRALAVVVVATAFAVVAVRGEQCGSQAGGALCPNCLCCSQYGWCGSTSAYCGSGCQSQCSGSCGGGGPTPPSGGGGSGVASIVSRSLFDQMLLHRNDAACPAKNFYTYDAFVAAANAFPSFATTGDAATRKREVAAFLAQTSHETTGGWATAPDGPYSWGYCFKEENNGNVGSDYCVQSSQWPCAAGKKYYGRGPIQISYNYNYGPAGQAIGSNLLSNPDLVASDATVSFKTAFWFWMTPQSPKPSCHAVMTGQWTPNGNDQAAGRVPGYGVVTNIINGGVECGHGADSRVADRIGFYKRYCDMLGVSYGANLDCYNQRPFNS</sequence>
<comment type="function">
    <text evidence="5">Hydrolyzes chitin and may play a role in defense against fungal pathogens containing chitin.</text>
</comment>
<comment type="catalytic activity">
    <reaction>
        <text>Random endo-hydrolysis of N-acetyl-beta-D-glucosaminide (1-&gt;4)-beta-linkages in chitin and chitodextrins.</text>
        <dbReference type="EC" id="3.2.1.14"/>
    </reaction>
</comment>
<comment type="tissue specificity">
    <text evidence="4">Expressed in roots, leaves, sheaths and meristems.</text>
</comment>
<comment type="induction">
    <text evidence="5">By fungal elicitor and wounding.</text>
</comment>
<comment type="similarity">
    <text evidence="6">Belongs to the glycosyl hydrolase 19 family. Chitinase class I subfamily.</text>
</comment>
<dbReference type="EC" id="3.2.1.14"/>
<dbReference type="EMBL" id="D16221">
    <property type="protein sequence ID" value="BAA03749.1"/>
    <property type="molecule type" value="Genomic_DNA"/>
</dbReference>
<dbReference type="EMBL" id="EF122477">
    <property type="protein sequence ID" value="ABL74564.1"/>
    <property type="molecule type" value="mRNA"/>
</dbReference>
<dbReference type="EMBL" id="AP003685">
    <property type="protein sequence ID" value="BAD61709.1"/>
    <property type="molecule type" value="Genomic_DNA"/>
</dbReference>
<dbReference type="EMBL" id="AP004685">
    <property type="protein sequence ID" value="BAD61801.1"/>
    <property type="molecule type" value="Genomic_DNA"/>
</dbReference>
<dbReference type="EMBL" id="AP014962">
    <property type="protein sequence ID" value="BAS99596.1"/>
    <property type="molecule type" value="Genomic_DNA"/>
</dbReference>
<dbReference type="EMBL" id="CM000143">
    <property type="protein sequence ID" value="EAZ38338.1"/>
    <property type="molecule type" value="Genomic_DNA"/>
</dbReference>
<dbReference type="EMBL" id="X56063">
    <property type="protein sequence ID" value="CAA39535.1"/>
    <property type="molecule type" value="mRNA"/>
</dbReference>
<dbReference type="PIR" id="T03614">
    <property type="entry name" value="T03614"/>
</dbReference>
<dbReference type="SMR" id="Q42993"/>
<dbReference type="FunCoup" id="Q42993">
    <property type="interactions" value="25"/>
</dbReference>
<dbReference type="STRING" id="39947.Q42993"/>
<dbReference type="CAZy" id="CBM18">
    <property type="family name" value="Carbohydrate-Binding Module Family 18"/>
</dbReference>
<dbReference type="CAZy" id="GH19">
    <property type="family name" value="Glycoside Hydrolase Family 19"/>
</dbReference>
<dbReference type="PaxDb" id="39947-Q42993"/>
<dbReference type="EnsemblPlants" id="Os06t0726200-02">
    <property type="protein sequence ID" value="Os06t0726200-02"/>
    <property type="gene ID" value="Os06g0726200"/>
</dbReference>
<dbReference type="Gramene" id="Os06t0726200-02">
    <property type="protein sequence ID" value="Os06t0726200-02"/>
    <property type="gene ID" value="Os06g0726200"/>
</dbReference>
<dbReference type="eggNOG" id="KOG4742">
    <property type="taxonomic scope" value="Eukaryota"/>
</dbReference>
<dbReference type="HOGENOM" id="CLU_045506_1_0_1"/>
<dbReference type="InParanoid" id="Q42993"/>
<dbReference type="OMA" id="GSDYCQP"/>
<dbReference type="Proteomes" id="UP000000763">
    <property type="component" value="Chromosome 6"/>
</dbReference>
<dbReference type="Proteomes" id="UP000007752">
    <property type="component" value="Chromosome 6"/>
</dbReference>
<dbReference type="Proteomes" id="UP000059680">
    <property type="component" value="Chromosome 6"/>
</dbReference>
<dbReference type="GO" id="GO:0008061">
    <property type="term" value="F:chitin binding"/>
    <property type="evidence" value="ECO:0007669"/>
    <property type="project" value="UniProtKB-KW"/>
</dbReference>
<dbReference type="GO" id="GO:0004568">
    <property type="term" value="F:chitinase activity"/>
    <property type="evidence" value="ECO:0000314"/>
    <property type="project" value="UniProtKB"/>
</dbReference>
<dbReference type="GO" id="GO:0008843">
    <property type="term" value="F:endochitinase activity"/>
    <property type="evidence" value="ECO:0007669"/>
    <property type="project" value="UniProtKB-EC"/>
</dbReference>
<dbReference type="GO" id="GO:0016998">
    <property type="term" value="P:cell wall macromolecule catabolic process"/>
    <property type="evidence" value="ECO:0007669"/>
    <property type="project" value="InterPro"/>
</dbReference>
<dbReference type="GO" id="GO:0006032">
    <property type="term" value="P:chitin catabolic process"/>
    <property type="evidence" value="ECO:0007669"/>
    <property type="project" value="UniProtKB-KW"/>
</dbReference>
<dbReference type="GO" id="GO:0050832">
    <property type="term" value="P:defense response to fungus"/>
    <property type="evidence" value="ECO:0000270"/>
    <property type="project" value="UniProtKB"/>
</dbReference>
<dbReference type="GO" id="GO:0000272">
    <property type="term" value="P:polysaccharide catabolic process"/>
    <property type="evidence" value="ECO:0007669"/>
    <property type="project" value="UniProtKB-KW"/>
</dbReference>
<dbReference type="CDD" id="cd00325">
    <property type="entry name" value="chitinase_GH19"/>
    <property type="match status" value="1"/>
</dbReference>
<dbReference type="CDD" id="cd06921">
    <property type="entry name" value="ChtBD1_GH19_hevein"/>
    <property type="match status" value="1"/>
</dbReference>
<dbReference type="FunFam" id="3.30.60.10:FF:000001">
    <property type="entry name" value="Basic endochitinase"/>
    <property type="match status" value="1"/>
</dbReference>
<dbReference type="FunFam" id="3.30.20.10:FF:000001">
    <property type="entry name" value="Endochitinase (Chitinase)"/>
    <property type="match status" value="1"/>
</dbReference>
<dbReference type="Gene3D" id="1.10.530.10">
    <property type="match status" value="1"/>
</dbReference>
<dbReference type="Gene3D" id="3.30.20.10">
    <property type="entry name" value="Endochitinase, domain 2"/>
    <property type="match status" value="1"/>
</dbReference>
<dbReference type="Gene3D" id="3.30.60.10">
    <property type="entry name" value="Endochitinase-like"/>
    <property type="match status" value="1"/>
</dbReference>
<dbReference type="InterPro" id="IPR001002">
    <property type="entry name" value="Chitin-bd_1"/>
</dbReference>
<dbReference type="InterPro" id="IPR018371">
    <property type="entry name" value="Chitin-binding_1_CS"/>
</dbReference>
<dbReference type="InterPro" id="IPR036861">
    <property type="entry name" value="Endochitinase-like_sf"/>
</dbReference>
<dbReference type="InterPro" id="IPR016283">
    <property type="entry name" value="Glyco_hydro_19"/>
</dbReference>
<dbReference type="InterPro" id="IPR000726">
    <property type="entry name" value="Glyco_hydro_19_cat"/>
</dbReference>
<dbReference type="InterPro" id="IPR023346">
    <property type="entry name" value="Lysozyme-like_dom_sf"/>
</dbReference>
<dbReference type="PANTHER" id="PTHR22595:SF79">
    <property type="entry name" value="CHITINASE 12"/>
    <property type="match status" value="1"/>
</dbReference>
<dbReference type="PANTHER" id="PTHR22595">
    <property type="entry name" value="CHITINASE-RELATED"/>
    <property type="match status" value="1"/>
</dbReference>
<dbReference type="Pfam" id="PF00187">
    <property type="entry name" value="Chitin_bind_1"/>
    <property type="match status" value="1"/>
</dbReference>
<dbReference type="Pfam" id="PF00182">
    <property type="entry name" value="Glyco_hydro_19"/>
    <property type="match status" value="1"/>
</dbReference>
<dbReference type="PIRSF" id="PIRSF001060">
    <property type="entry name" value="Endochitinase"/>
    <property type="match status" value="1"/>
</dbReference>
<dbReference type="PRINTS" id="PR00451">
    <property type="entry name" value="CHITINBINDNG"/>
</dbReference>
<dbReference type="SMART" id="SM00270">
    <property type="entry name" value="ChtBD1"/>
    <property type="match status" value="1"/>
</dbReference>
<dbReference type="SUPFAM" id="SSF53955">
    <property type="entry name" value="Lysozyme-like"/>
    <property type="match status" value="1"/>
</dbReference>
<dbReference type="SUPFAM" id="SSF57016">
    <property type="entry name" value="Plant lectins/antimicrobial peptides"/>
    <property type="match status" value="1"/>
</dbReference>
<dbReference type="PROSITE" id="PS00026">
    <property type="entry name" value="CHIT_BIND_I_1"/>
    <property type="match status" value="1"/>
</dbReference>
<dbReference type="PROSITE" id="PS50941">
    <property type="entry name" value="CHIT_BIND_I_2"/>
    <property type="match status" value="1"/>
</dbReference>
<dbReference type="PROSITE" id="PS00773">
    <property type="entry name" value="CHITINASE_19_1"/>
    <property type="match status" value="1"/>
</dbReference>
<dbReference type="PROSITE" id="PS00774">
    <property type="entry name" value="CHITINASE_19_2"/>
    <property type="match status" value="1"/>
</dbReference>